<protein>
    <recommendedName>
        <fullName evidence="1">Protein PB1-F2</fullName>
    </recommendedName>
</protein>
<keyword id="KW-0053">Apoptosis</keyword>
<keyword id="KW-1035">Host cytoplasm</keyword>
<keyword id="KW-1043">Host membrane</keyword>
<keyword id="KW-1045">Host mitochondrion</keyword>
<keyword id="KW-1046">Host mitochondrion inner membrane</keyword>
<keyword id="KW-1048">Host nucleus</keyword>
<keyword id="KW-0945">Host-virus interaction</keyword>
<keyword id="KW-1090">Inhibition of host innate immune response by virus</keyword>
<keyword id="KW-1097">Inhibition of host MAVS by virus</keyword>
<keyword id="KW-1113">Inhibition of host RLR pathway by virus</keyword>
<keyword id="KW-0472">Membrane</keyword>
<keyword id="KW-1119">Modulation of host cell apoptosis by virus</keyword>
<keyword id="KW-0899">Viral immunoevasion</keyword>
<dbReference type="EMBL" id="CY034130">
    <property type="protein sequence ID" value="ACF54596.1"/>
    <property type="molecule type" value="Viral_cRNA"/>
</dbReference>
<dbReference type="BMRB" id="B4URE5"/>
<dbReference type="SMR" id="B4URE5"/>
<dbReference type="Proteomes" id="UP000008081">
    <property type="component" value="Genome"/>
</dbReference>
<dbReference type="GO" id="GO:0044164">
    <property type="term" value="C:host cell cytosol"/>
    <property type="evidence" value="ECO:0007669"/>
    <property type="project" value="UniProtKB-SubCell"/>
</dbReference>
<dbReference type="GO" id="GO:0044192">
    <property type="term" value="C:host cell mitochondrial inner membrane"/>
    <property type="evidence" value="ECO:0007669"/>
    <property type="project" value="UniProtKB-SubCell"/>
</dbReference>
<dbReference type="GO" id="GO:0042025">
    <property type="term" value="C:host cell nucleus"/>
    <property type="evidence" value="ECO:0007669"/>
    <property type="project" value="UniProtKB-SubCell"/>
</dbReference>
<dbReference type="GO" id="GO:0016020">
    <property type="term" value="C:membrane"/>
    <property type="evidence" value="ECO:0007669"/>
    <property type="project" value="UniProtKB-UniRule"/>
</dbReference>
<dbReference type="GO" id="GO:0052150">
    <property type="term" value="P:symbiont-mediated perturbation of host apoptosis"/>
    <property type="evidence" value="ECO:0007669"/>
    <property type="project" value="UniProtKB-KW"/>
</dbReference>
<dbReference type="GO" id="GO:0039545">
    <property type="term" value="P:symbiont-mediated suppression of host cytoplasmic pattern recognition receptor signaling pathway via inhibition of MAVS activity"/>
    <property type="evidence" value="ECO:0000250"/>
    <property type="project" value="UniProtKB"/>
</dbReference>
<dbReference type="HAMAP" id="MF_04064">
    <property type="entry name" value="INFV_PB1F2"/>
    <property type="match status" value="1"/>
</dbReference>
<dbReference type="InterPro" id="IPR021045">
    <property type="entry name" value="Flu_proapoptotic_PB1-F2"/>
</dbReference>
<dbReference type="Pfam" id="PF11986">
    <property type="entry name" value="PB1-F2"/>
    <property type="match status" value="1"/>
</dbReference>
<sequence>MGQEQDTPWILSTGHISTQKREDGQQTPKLEHRNSTRLMGHFQKTMNQVVMPKQIVYWRRWLSLRNPILVFLKTRVLKRWRLFSKHE</sequence>
<name>PB1F2_I06A0</name>
<organism>
    <name type="scientific">Influenza A virus (strain A/Russia:St.Petersburg/8/2006 H1N1)</name>
    <dbReference type="NCBI Taxonomy" id="518998"/>
    <lineage>
        <taxon>Viruses</taxon>
        <taxon>Riboviria</taxon>
        <taxon>Orthornavirae</taxon>
        <taxon>Negarnaviricota</taxon>
        <taxon>Polyploviricotina</taxon>
        <taxon>Insthoviricetes</taxon>
        <taxon>Articulavirales</taxon>
        <taxon>Orthomyxoviridae</taxon>
        <taxon>Alphainfluenzavirus</taxon>
        <taxon>Alphainfluenzavirus influenzae</taxon>
        <taxon>Influenza A virus</taxon>
    </lineage>
</organism>
<feature type="chain" id="PRO_0000373011" description="Protein PB1-F2">
    <location>
        <begin position="1"/>
        <end position="87"/>
    </location>
</feature>
<feature type="region of interest" description="Disordered" evidence="2">
    <location>
        <begin position="1"/>
        <end position="35"/>
    </location>
</feature>
<feature type="region of interest" description="Mitochondrial targeting sequence" evidence="1">
    <location>
        <begin position="65"/>
        <end position="87"/>
    </location>
</feature>
<feature type="compositionally biased region" description="Basic and acidic residues" evidence="2">
    <location>
        <begin position="19"/>
        <end position="34"/>
    </location>
</feature>
<feature type="site" description="Low pathogenicity" evidence="1">
    <location>
        <position position="66"/>
    </location>
</feature>
<organismHost>
    <name type="scientific">Aves</name>
    <dbReference type="NCBI Taxonomy" id="8782"/>
</organismHost>
<organismHost>
    <name type="scientific">Homo sapiens</name>
    <name type="common">Human</name>
    <dbReference type="NCBI Taxonomy" id="9606"/>
</organismHost>
<organismHost>
    <name type="scientific">Sus scrofa</name>
    <name type="common">Pig</name>
    <dbReference type="NCBI Taxonomy" id="9823"/>
</organismHost>
<evidence type="ECO:0000255" key="1">
    <source>
        <dbReference type="HAMAP-Rule" id="MF_04064"/>
    </source>
</evidence>
<evidence type="ECO:0000256" key="2">
    <source>
        <dbReference type="SAM" id="MobiDB-lite"/>
    </source>
</evidence>
<proteinExistence type="inferred from homology"/>
<reference key="1">
    <citation type="submission" date="2008-07" db="EMBL/GenBank/DDBJ databases">
        <title>The NIAID influenza genome sequencing project.</title>
        <authorList>
            <person name="Spiro D."/>
            <person name="Halpin R."/>
            <person name="Boyne A."/>
            <person name="Bera J."/>
            <person name="Ghedin E."/>
            <person name="Hostetler J."/>
            <person name="Fedorova N."/>
            <person name="Hine E."/>
            <person name="Overton L."/>
            <person name="Djuric K."/>
            <person name="Sarmiento M."/>
            <person name="Sitz J."/>
            <person name="Katzel D."/>
            <person name="Manojkumar R."/>
            <person name="Devis R."/>
            <person name="Fulvini A."/>
            <person name="Silverman J."/>
            <person name="Le J."/>
            <person name="Kilbourne E.D."/>
            <person name="Pokorny B."/>
            <person name="Bucher D."/>
            <person name="Orff E."/>
            <person name="Minieri J."/>
            <person name="Onodera S."/>
            <person name="Huang L."/>
            <person name="Bao Y."/>
            <person name="Sanders R."/>
            <person name="Dernovoy D."/>
            <person name="Kiryutin B."/>
            <person name="Lipman D.J."/>
            <person name="Tatusova T."/>
        </authorList>
    </citation>
    <scope>NUCLEOTIDE SEQUENCE [GENOMIC RNA]</scope>
</reference>
<reference key="2">
    <citation type="submission" date="2008-07" db="EMBL/GenBank/DDBJ databases">
        <authorList>
            <consortium name="The NIAID Influenza Genome Sequencing Consortium"/>
        </authorList>
    </citation>
    <scope>NUCLEOTIDE SEQUENCE [GENOMIC RNA]</scope>
</reference>
<gene>
    <name evidence="1" type="primary">PB1</name>
    <name type="synonym">PB1-F2</name>
</gene>
<accession>B4URE5</accession>
<comment type="function">
    <text evidence="1">Plays an important role in promoting lung pathology in both primary viral infection and secondary bacterial infection. Promotes alteration of mitochondrial morphology, dissipation of mitochondrial membrane potential, and cell death. Alternatively, inhibits the production of interferon in the infected cell at the level of host mitochondrial antiviral signaling MAVS. Its level of expression differs greatly depending on which cell type is infected, in a manner that is independent of the levels of expression of other viral proteins. Monocytic cells are more affected than epithelial cells. Seems to disable virus-infected monocytes or other host innate immune cells. During early stage of infection, predisposes the mitochondria to permeability transition through interaction with host SLC25A6/ANT3 and VDAC1. These proteins participate in the formation of the permeability transition pore complex (PTPC) responsible of the release of mitochondrial products that triggers apoptosis.</text>
</comment>
<comment type="subunit">
    <text evidence="1">Oligomer. Interacts with human SLC25A6/ANT3 and VDAC1. Interacts with host MAVS.</text>
</comment>
<comment type="subcellular location">
    <subcellularLocation>
        <location evidence="1">Host mitochondrion inner membrane</location>
    </subcellularLocation>
    <subcellularLocation>
        <location evidence="1">Host nucleus</location>
    </subcellularLocation>
    <subcellularLocation>
        <location evidence="1">Host cytoplasm</location>
        <location evidence="1">Host cytosol</location>
    </subcellularLocation>
    <text evidence="1">Inner mitochondrial membrane in most cells types. Otherwise is detected in the nucleus and cytosol.</text>
</comment>
<comment type="miscellaneous">
    <text>Is not encoded in all strains, and seems to be dispensable for replication.</text>
</comment>
<comment type="similarity">
    <text evidence="1">Belongs to the influenza viruses PB1-F2 family.</text>
</comment>